<dbReference type="EC" id="1.2.1.10" evidence="1"/>
<dbReference type="EMBL" id="AB085906">
    <property type="protein sequence ID" value="BAB97164.1"/>
    <property type="molecule type" value="Genomic_DNA"/>
</dbReference>
<dbReference type="EMBL" id="CP000432">
    <property type="protein sequence ID" value="ABH00062.1"/>
    <property type="status" value="ALT_INIT"/>
    <property type="molecule type" value="Genomic_DNA"/>
</dbReference>
<dbReference type="RefSeq" id="WP_041813279.1">
    <property type="nucleotide sequence ID" value="NC_008269.1"/>
</dbReference>
<dbReference type="SMR" id="Q0RXC4"/>
<dbReference type="KEGG" id="rha:RHA1_ro09018"/>
<dbReference type="PATRIC" id="fig|101510.16.peg.8301"/>
<dbReference type="HOGENOM" id="CLU_062208_0_0_11"/>
<dbReference type="OrthoDB" id="9786743at2"/>
<dbReference type="Proteomes" id="UP000008710">
    <property type="component" value="Plasmid pRHL1"/>
</dbReference>
<dbReference type="GO" id="GO:0008774">
    <property type="term" value="F:acetaldehyde dehydrogenase (acetylating) activity"/>
    <property type="evidence" value="ECO:0007669"/>
    <property type="project" value="UniProtKB-UniRule"/>
</dbReference>
<dbReference type="GO" id="GO:0051287">
    <property type="term" value="F:NAD binding"/>
    <property type="evidence" value="ECO:0007669"/>
    <property type="project" value="UniProtKB-UniRule"/>
</dbReference>
<dbReference type="GO" id="GO:0009056">
    <property type="term" value="P:catabolic process"/>
    <property type="evidence" value="ECO:0007669"/>
    <property type="project" value="UniProtKB-KW"/>
</dbReference>
<dbReference type="CDD" id="cd23933">
    <property type="entry name" value="ALDH_C"/>
    <property type="match status" value="1"/>
</dbReference>
<dbReference type="Gene3D" id="3.30.360.10">
    <property type="entry name" value="Dihydrodipicolinate Reductase, domain 2"/>
    <property type="match status" value="1"/>
</dbReference>
<dbReference type="Gene3D" id="3.40.50.720">
    <property type="entry name" value="NAD(P)-binding Rossmann-like Domain"/>
    <property type="match status" value="1"/>
</dbReference>
<dbReference type="HAMAP" id="MF_01657">
    <property type="entry name" value="Ac_ald_DH_ac"/>
    <property type="match status" value="1"/>
</dbReference>
<dbReference type="InterPro" id="IPR003361">
    <property type="entry name" value="Acetaldehyde_dehydrogenase"/>
</dbReference>
<dbReference type="InterPro" id="IPR015426">
    <property type="entry name" value="Acetylaldehyde_DH_C"/>
</dbReference>
<dbReference type="InterPro" id="IPR036291">
    <property type="entry name" value="NAD(P)-bd_dom_sf"/>
</dbReference>
<dbReference type="InterPro" id="IPR000534">
    <property type="entry name" value="Semialdehyde_DH_NAD-bd"/>
</dbReference>
<dbReference type="NCBIfam" id="TIGR03215">
    <property type="entry name" value="ac_ald_DH_ac"/>
    <property type="match status" value="1"/>
</dbReference>
<dbReference type="NCBIfam" id="NF006157">
    <property type="entry name" value="PRK08300.1"/>
    <property type="match status" value="1"/>
</dbReference>
<dbReference type="Pfam" id="PF09290">
    <property type="entry name" value="AcetDehyd-dimer"/>
    <property type="match status" value="1"/>
</dbReference>
<dbReference type="PIRSF" id="PIRSF015689">
    <property type="entry name" value="Actaldh_dh_actl"/>
    <property type="match status" value="1"/>
</dbReference>
<dbReference type="SMART" id="SM00859">
    <property type="entry name" value="Semialdhyde_dh"/>
    <property type="match status" value="1"/>
</dbReference>
<dbReference type="SUPFAM" id="SSF55347">
    <property type="entry name" value="Glyceraldehyde-3-phosphate dehydrogenase-like, C-terminal domain"/>
    <property type="match status" value="1"/>
</dbReference>
<dbReference type="SUPFAM" id="SSF51735">
    <property type="entry name" value="NAD(P)-binding Rossmann-fold domains"/>
    <property type="match status" value="1"/>
</dbReference>
<evidence type="ECO:0000255" key="1">
    <source>
        <dbReference type="HAMAP-Rule" id="MF_01657"/>
    </source>
</evidence>
<evidence type="ECO:0000305" key="2"/>
<reference key="1">
    <citation type="journal article" date="2003" name="Appl. Environ. Microbiol.">
        <title>2-Hydroxypenta-2,4-dienoate metabolic pathway genes in a strong polychlorinated biphenyl degrader, Rhodococcus sp. strain RHA1.</title>
        <authorList>
            <person name="Sakai M."/>
            <person name="Miyauchi K."/>
            <person name="Kato N."/>
            <person name="Masai E."/>
            <person name="Fukuda M."/>
        </authorList>
    </citation>
    <scope>NUCLEOTIDE SEQUENCE [GENOMIC DNA]</scope>
</reference>
<reference key="2">
    <citation type="journal article" date="2006" name="Proc. Natl. Acad. Sci. U.S.A.">
        <title>The complete genome of Rhodococcus sp. RHA1 provides insights into a catabolic powerhouse.</title>
        <authorList>
            <person name="McLeod M.P."/>
            <person name="Warren R.L."/>
            <person name="Hsiao W.W.L."/>
            <person name="Araki N."/>
            <person name="Myhre M."/>
            <person name="Fernandes C."/>
            <person name="Miyazawa D."/>
            <person name="Wong W."/>
            <person name="Lillquist A.L."/>
            <person name="Wang D."/>
            <person name="Dosanjh M."/>
            <person name="Hara H."/>
            <person name="Petrescu A."/>
            <person name="Morin R.D."/>
            <person name="Yang G."/>
            <person name="Stott J.M."/>
            <person name="Schein J.E."/>
            <person name="Shin H."/>
            <person name="Smailus D."/>
            <person name="Siddiqui A.S."/>
            <person name="Marra M.A."/>
            <person name="Jones S.J.M."/>
            <person name="Holt R."/>
            <person name="Brinkman F.S.L."/>
            <person name="Miyauchi K."/>
            <person name="Fukuda M."/>
            <person name="Davies J.E."/>
            <person name="Mohn W.W."/>
            <person name="Eltis L.D."/>
        </authorList>
    </citation>
    <scope>NUCLEOTIDE SEQUENCE [LARGE SCALE GENOMIC DNA]</scope>
    <source>
        <strain>RHA1</strain>
    </source>
</reference>
<comment type="catalytic activity">
    <reaction evidence="1">
        <text>acetaldehyde + NAD(+) + CoA = acetyl-CoA + NADH + H(+)</text>
        <dbReference type="Rhea" id="RHEA:23288"/>
        <dbReference type="ChEBI" id="CHEBI:15343"/>
        <dbReference type="ChEBI" id="CHEBI:15378"/>
        <dbReference type="ChEBI" id="CHEBI:57287"/>
        <dbReference type="ChEBI" id="CHEBI:57288"/>
        <dbReference type="ChEBI" id="CHEBI:57540"/>
        <dbReference type="ChEBI" id="CHEBI:57945"/>
        <dbReference type="EC" id="1.2.1.10"/>
    </reaction>
</comment>
<comment type="similarity">
    <text evidence="1">Belongs to the acetaldehyde dehydrogenase family.</text>
</comment>
<comment type="sequence caution" evidence="2">
    <conflict type="erroneous initiation">
        <sequence resource="EMBL-CDS" id="ABH00062"/>
    </conflict>
</comment>
<sequence length="299" mass="31708">MEPINAAIVGPGNIGTDLLAKLERVDSIAVQYVVGVVESDGLERARAKGISASAGGVDWLLEQDPLPEIVFEATSAKAHQLNAPRYHELNIQAVDLTPAHIGPMVCPPVNLTHHIDAPNVSMITCGGQATIPMVHAVSRVSAVPYAEIVASVASRGAGPGTRANIDEFTQTTGQAVSEVGGAARGRAIIILNPMEPPMIMRDTVYCMIDADADRDAISESVHRMVTEVQAYVPGYRLRADPQFDDPKDGWDGHGRVAIFLEVEGNGDYLPKYAGNLDIMTAAAARVGDSIARNRMGVPA</sequence>
<geneLocation type="plasmid">
    <name>pRHL1</name>
</geneLocation>
<organism>
    <name type="scientific">Rhodococcus jostii (strain RHA1)</name>
    <dbReference type="NCBI Taxonomy" id="101510"/>
    <lineage>
        <taxon>Bacteria</taxon>
        <taxon>Bacillati</taxon>
        <taxon>Actinomycetota</taxon>
        <taxon>Actinomycetes</taxon>
        <taxon>Mycobacteriales</taxon>
        <taxon>Nocardiaceae</taxon>
        <taxon>Rhodococcus</taxon>
    </lineage>
</organism>
<name>ACDH6_RHOJR</name>
<protein>
    <recommendedName>
        <fullName evidence="1">Acetaldehyde dehydrogenase 6</fullName>
        <ecNumber evidence="1">1.2.1.10</ecNumber>
    </recommendedName>
    <alternativeName>
        <fullName evidence="1">Acetaldehyde dehydrogenase [acetylating] 6</fullName>
    </alternativeName>
</protein>
<gene>
    <name type="primary">hpdG</name>
    <name type="ordered locus">RHA1_ro09018</name>
</gene>
<proteinExistence type="inferred from homology"/>
<keyword id="KW-0058">Aromatic hydrocarbons catabolism</keyword>
<keyword id="KW-0520">NAD</keyword>
<keyword id="KW-0560">Oxidoreductase</keyword>
<keyword id="KW-0614">Plasmid</keyword>
<feature type="chain" id="PRO_0000387731" description="Acetaldehyde dehydrogenase 6">
    <location>
        <begin position="1"/>
        <end position="299"/>
    </location>
</feature>
<feature type="active site" description="Acyl-thioester intermediate" evidence="1">
    <location>
        <position position="125"/>
    </location>
</feature>
<feature type="binding site" evidence="1">
    <location>
        <begin position="156"/>
        <end position="164"/>
    </location>
    <ligand>
        <name>NAD(+)</name>
        <dbReference type="ChEBI" id="CHEBI:57540"/>
    </ligand>
</feature>
<feature type="binding site" evidence="1">
    <location>
        <position position="275"/>
    </location>
    <ligand>
        <name>NAD(+)</name>
        <dbReference type="ChEBI" id="CHEBI:57540"/>
    </ligand>
</feature>
<accession>Q0RXC4</accession>
<accession>Q8KZT1</accession>